<gene>
    <name evidence="1" type="primary">cmoA</name>
    <name type="ordered locus">Maqu_2762</name>
</gene>
<feature type="chain" id="PRO_0000314346" description="Carboxy-S-adenosyl-L-methionine synthase">
    <location>
        <begin position="1"/>
        <end position="250"/>
    </location>
</feature>
<feature type="binding site" evidence="1">
    <location>
        <position position="45"/>
    </location>
    <ligand>
        <name>S-adenosyl-L-methionine</name>
        <dbReference type="ChEBI" id="CHEBI:59789"/>
    </ligand>
</feature>
<feature type="binding site" evidence="1">
    <location>
        <begin position="70"/>
        <end position="72"/>
    </location>
    <ligand>
        <name>S-adenosyl-L-methionine</name>
        <dbReference type="ChEBI" id="CHEBI:59789"/>
    </ligand>
</feature>
<feature type="binding site" evidence="1">
    <location>
        <begin position="95"/>
        <end position="96"/>
    </location>
    <ligand>
        <name>S-adenosyl-L-methionine</name>
        <dbReference type="ChEBI" id="CHEBI:59789"/>
    </ligand>
</feature>
<feature type="binding site" evidence="1">
    <location>
        <begin position="123"/>
        <end position="124"/>
    </location>
    <ligand>
        <name>S-adenosyl-L-methionine</name>
        <dbReference type="ChEBI" id="CHEBI:59789"/>
    </ligand>
</feature>
<feature type="binding site" evidence="1">
    <location>
        <position position="138"/>
    </location>
    <ligand>
        <name>S-adenosyl-L-methionine</name>
        <dbReference type="ChEBI" id="CHEBI:59789"/>
    </ligand>
</feature>
<feature type="binding site" evidence="1">
    <location>
        <position position="205"/>
    </location>
    <ligand>
        <name>S-adenosyl-L-methionine</name>
        <dbReference type="ChEBI" id="CHEBI:59789"/>
    </ligand>
</feature>
<comment type="function">
    <text evidence="1">Catalyzes the conversion of S-adenosyl-L-methionine (SAM) to carboxy-S-adenosyl-L-methionine (Cx-SAM).</text>
</comment>
<comment type="catalytic activity">
    <reaction evidence="1">
        <text>prephenate + S-adenosyl-L-methionine = carboxy-S-adenosyl-L-methionine + 3-phenylpyruvate + H2O</text>
        <dbReference type="Rhea" id="RHEA:51692"/>
        <dbReference type="ChEBI" id="CHEBI:15377"/>
        <dbReference type="ChEBI" id="CHEBI:18005"/>
        <dbReference type="ChEBI" id="CHEBI:29934"/>
        <dbReference type="ChEBI" id="CHEBI:59789"/>
        <dbReference type="ChEBI" id="CHEBI:134278"/>
    </reaction>
</comment>
<comment type="subunit">
    <text evidence="1">Homodimer.</text>
</comment>
<comment type="similarity">
    <text evidence="1">Belongs to the class I-like SAM-binding methyltransferase superfamily. Cx-SAM synthase family.</text>
</comment>
<keyword id="KW-0949">S-adenosyl-L-methionine</keyword>
<keyword id="KW-0808">Transferase</keyword>
<sequence>MSNRTPPEQLTDRLFATERNPEDFRFDASVARVFPDMIRRSVPGYTTIIPMIEVITEQYVQPGSHCYDLGCSLGASTLAMRHGIPYPDCTLVGVDNSEAMIERCEHYVALDDHDLPVTLRCEDILSTELSNASVTTLNFTLQFVPPEQRLALLTRIGDATLPGGVLVLSEKIRFESDAEQAIQTRLHHEFKRANGYSDLEISQKRAAIEKVLIPETLADHRDRLQRAGFDQVLVWYQCFNFVSMLAIKNS</sequence>
<reference key="1">
    <citation type="journal article" date="2011" name="Appl. Environ. Microbiol.">
        <title>Genomic potential of Marinobacter aquaeolei, a biogeochemical 'opportunitroph'.</title>
        <authorList>
            <person name="Singer E."/>
            <person name="Webb E.A."/>
            <person name="Nelson W.C."/>
            <person name="Heidelberg J.F."/>
            <person name="Ivanova N."/>
            <person name="Pati A."/>
            <person name="Edwards K.J."/>
        </authorList>
    </citation>
    <scope>NUCLEOTIDE SEQUENCE [LARGE SCALE GENOMIC DNA]</scope>
    <source>
        <strain>ATCC 700491 / DSM 11845 / VT8</strain>
    </source>
</reference>
<evidence type="ECO:0000255" key="1">
    <source>
        <dbReference type="HAMAP-Rule" id="MF_01589"/>
    </source>
</evidence>
<organism>
    <name type="scientific">Marinobacter nauticus (strain ATCC 700491 / DSM 11845 / VT8)</name>
    <name type="common">Marinobacter aquaeolei</name>
    <dbReference type="NCBI Taxonomy" id="351348"/>
    <lineage>
        <taxon>Bacteria</taxon>
        <taxon>Pseudomonadati</taxon>
        <taxon>Pseudomonadota</taxon>
        <taxon>Gammaproteobacteria</taxon>
        <taxon>Pseudomonadales</taxon>
        <taxon>Marinobacteraceae</taxon>
        <taxon>Marinobacter</taxon>
    </lineage>
</organism>
<dbReference type="EC" id="2.1.3.-" evidence="1"/>
<dbReference type="EMBL" id="CP000514">
    <property type="protein sequence ID" value="ABM19837.1"/>
    <property type="molecule type" value="Genomic_DNA"/>
</dbReference>
<dbReference type="RefSeq" id="WP_011786207.1">
    <property type="nucleotide sequence ID" value="NC_008740.1"/>
</dbReference>
<dbReference type="SMR" id="A1U4B8"/>
<dbReference type="STRING" id="351348.Maqu_2762"/>
<dbReference type="GeneID" id="31822041"/>
<dbReference type="KEGG" id="maq:Maqu_2762"/>
<dbReference type="eggNOG" id="COG4106">
    <property type="taxonomic scope" value="Bacteria"/>
</dbReference>
<dbReference type="HOGENOM" id="CLU_078475_0_0_6"/>
<dbReference type="OrthoDB" id="9779941at2"/>
<dbReference type="Proteomes" id="UP000000998">
    <property type="component" value="Chromosome"/>
</dbReference>
<dbReference type="GO" id="GO:0016743">
    <property type="term" value="F:carboxyl- or carbamoyltransferase activity"/>
    <property type="evidence" value="ECO:0007669"/>
    <property type="project" value="UniProtKB-UniRule"/>
</dbReference>
<dbReference type="GO" id="GO:1904047">
    <property type="term" value="F:S-adenosyl-L-methionine binding"/>
    <property type="evidence" value="ECO:0007669"/>
    <property type="project" value="UniProtKB-UniRule"/>
</dbReference>
<dbReference type="GO" id="GO:0002098">
    <property type="term" value="P:tRNA wobble uridine modification"/>
    <property type="evidence" value="ECO:0007669"/>
    <property type="project" value="InterPro"/>
</dbReference>
<dbReference type="CDD" id="cd02440">
    <property type="entry name" value="AdoMet_MTases"/>
    <property type="match status" value="1"/>
</dbReference>
<dbReference type="Gene3D" id="3.40.50.150">
    <property type="entry name" value="Vaccinia Virus protein VP39"/>
    <property type="match status" value="1"/>
</dbReference>
<dbReference type="HAMAP" id="MF_01589">
    <property type="entry name" value="Cx_SAM_synthase"/>
    <property type="match status" value="1"/>
</dbReference>
<dbReference type="InterPro" id="IPR005271">
    <property type="entry name" value="CmoA"/>
</dbReference>
<dbReference type="InterPro" id="IPR041698">
    <property type="entry name" value="Methyltransf_25"/>
</dbReference>
<dbReference type="InterPro" id="IPR029063">
    <property type="entry name" value="SAM-dependent_MTases_sf"/>
</dbReference>
<dbReference type="NCBIfam" id="TIGR00740">
    <property type="entry name" value="carboxy-S-adenosyl-L-methionine synthase CmoA"/>
    <property type="match status" value="1"/>
</dbReference>
<dbReference type="PANTHER" id="PTHR43861:SF2">
    <property type="entry name" value="CARBOXY-S-ADENOSYL-L-METHIONINE SYNTHASE"/>
    <property type="match status" value="1"/>
</dbReference>
<dbReference type="PANTHER" id="PTHR43861">
    <property type="entry name" value="TRANS-ACONITATE 2-METHYLTRANSFERASE-RELATED"/>
    <property type="match status" value="1"/>
</dbReference>
<dbReference type="Pfam" id="PF13649">
    <property type="entry name" value="Methyltransf_25"/>
    <property type="match status" value="1"/>
</dbReference>
<dbReference type="PIRSF" id="PIRSF006325">
    <property type="entry name" value="MeTrfase_bac"/>
    <property type="match status" value="1"/>
</dbReference>
<dbReference type="SUPFAM" id="SSF53335">
    <property type="entry name" value="S-adenosyl-L-methionine-dependent methyltransferases"/>
    <property type="match status" value="1"/>
</dbReference>
<accession>A1U4B8</accession>
<protein>
    <recommendedName>
        <fullName evidence="1">Carboxy-S-adenosyl-L-methionine synthase</fullName>
        <shortName evidence="1">Cx-SAM synthase</shortName>
        <ecNumber evidence="1">2.1.3.-</ecNumber>
    </recommendedName>
</protein>
<name>CMOA_MARN8</name>
<proteinExistence type="inferred from homology"/>